<sequence>MHPITPVHYLALSAALLLIGTVGVLTRRNIVIILMSIELILNAVNINLIAFSHALQNINGQIFAIFVITDAVAEAAVGLGILIALFRNKETVQADEIDLLKW</sequence>
<name>NUOK2_SOLUE</name>
<feature type="chain" id="PRO_0000390245" description="NADH-quinone oxidoreductase subunit K 2">
    <location>
        <begin position="1"/>
        <end position="102"/>
    </location>
</feature>
<feature type="transmembrane region" description="Helical" evidence="1">
    <location>
        <begin position="4"/>
        <end position="24"/>
    </location>
</feature>
<feature type="transmembrane region" description="Helical" evidence="1">
    <location>
        <begin position="30"/>
        <end position="50"/>
    </location>
</feature>
<feature type="transmembrane region" description="Helical" evidence="1">
    <location>
        <begin position="62"/>
        <end position="82"/>
    </location>
</feature>
<reference key="1">
    <citation type="journal article" date="2009" name="Appl. Environ. Microbiol.">
        <title>Three genomes from the phylum Acidobacteria provide insight into the lifestyles of these microorganisms in soils.</title>
        <authorList>
            <person name="Ward N.L."/>
            <person name="Challacombe J.F."/>
            <person name="Janssen P.H."/>
            <person name="Henrissat B."/>
            <person name="Coutinho P.M."/>
            <person name="Wu M."/>
            <person name="Xie G."/>
            <person name="Haft D.H."/>
            <person name="Sait M."/>
            <person name="Badger J."/>
            <person name="Barabote R.D."/>
            <person name="Bradley B."/>
            <person name="Brettin T.S."/>
            <person name="Brinkac L.M."/>
            <person name="Bruce D."/>
            <person name="Creasy T."/>
            <person name="Daugherty S.C."/>
            <person name="Davidsen T.M."/>
            <person name="DeBoy R.T."/>
            <person name="Detter J.C."/>
            <person name="Dodson R.J."/>
            <person name="Durkin A.S."/>
            <person name="Ganapathy A."/>
            <person name="Gwinn-Giglio M."/>
            <person name="Han C.S."/>
            <person name="Khouri H."/>
            <person name="Kiss H."/>
            <person name="Kothari S.P."/>
            <person name="Madupu R."/>
            <person name="Nelson K.E."/>
            <person name="Nelson W.C."/>
            <person name="Paulsen I."/>
            <person name="Penn K."/>
            <person name="Ren Q."/>
            <person name="Rosovitz M.J."/>
            <person name="Selengut J.D."/>
            <person name="Shrivastava S."/>
            <person name="Sullivan S.A."/>
            <person name="Tapia R."/>
            <person name="Thompson L.S."/>
            <person name="Watkins K.L."/>
            <person name="Yang Q."/>
            <person name="Yu C."/>
            <person name="Zafar N."/>
            <person name="Zhou L."/>
            <person name="Kuske C.R."/>
        </authorList>
    </citation>
    <scope>NUCLEOTIDE SEQUENCE [LARGE SCALE GENOMIC DNA]</scope>
    <source>
        <strain>Ellin6076</strain>
    </source>
</reference>
<gene>
    <name evidence="1" type="primary">nuoK2</name>
    <name type="ordered locus">Acid_5687</name>
</gene>
<proteinExistence type="inferred from homology"/>
<comment type="function">
    <text evidence="1">NDH-1 shuttles electrons from NADH, via FMN and iron-sulfur (Fe-S) centers, to quinones in the respiratory chain. The immediate electron acceptor for the enzyme in this species is believed to be ubiquinone. Couples the redox reaction to proton translocation (for every two electrons transferred, four hydrogen ions are translocated across the cytoplasmic membrane), and thus conserves the redox energy in a proton gradient.</text>
</comment>
<comment type="catalytic activity">
    <reaction evidence="1">
        <text>a quinone + NADH + 5 H(+)(in) = a quinol + NAD(+) + 4 H(+)(out)</text>
        <dbReference type="Rhea" id="RHEA:57888"/>
        <dbReference type="ChEBI" id="CHEBI:15378"/>
        <dbReference type="ChEBI" id="CHEBI:24646"/>
        <dbReference type="ChEBI" id="CHEBI:57540"/>
        <dbReference type="ChEBI" id="CHEBI:57945"/>
        <dbReference type="ChEBI" id="CHEBI:132124"/>
    </reaction>
</comment>
<comment type="subunit">
    <text evidence="1">NDH-1 is composed of 14 different subunits. Subunits NuoA, H, J, K, L, M, N constitute the membrane sector of the complex.</text>
</comment>
<comment type="subcellular location">
    <subcellularLocation>
        <location evidence="1">Cell inner membrane</location>
        <topology evidence="1">Multi-pass membrane protein</topology>
    </subcellularLocation>
</comment>
<comment type="similarity">
    <text evidence="1">Belongs to the complex I subunit 4L family.</text>
</comment>
<accession>Q01UN6</accession>
<keyword id="KW-0997">Cell inner membrane</keyword>
<keyword id="KW-1003">Cell membrane</keyword>
<keyword id="KW-0472">Membrane</keyword>
<keyword id="KW-0520">NAD</keyword>
<keyword id="KW-0874">Quinone</keyword>
<keyword id="KW-1278">Translocase</keyword>
<keyword id="KW-0812">Transmembrane</keyword>
<keyword id="KW-1133">Transmembrane helix</keyword>
<keyword id="KW-0813">Transport</keyword>
<keyword id="KW-0830">Ubiquinone</keyword>
<organism>
    <name type="scientific">Solibacter usitatus (strain Ellin6076)</name>
    <dbReference type="NCBI Taxonomy" id="234267"/>
    <lineage>
        <taxon>Bacteria</taxon>
        <taxon>Pseudomonadati</taxon>
        <taxon>Acidobacteriota</taxon>
        <taxon>Terriglobia</taxon>
        <taxon>Bryobacterales</taxon>
        <taxon>Solibacteraceae</taxon>
        <taxon>Candidatus Solibacter</taxon>
    </lineage>
</organism>
<protein>
    <recommendedName>
        <fullName evidence="1">NADH-quinone oxidoreductase subunit K 2</fullName>
        <ecNumber evidence="1">7.1.1.-</ecNumber>
    </recommendedName>
    <alternativeName>
        <fullName evidence="1">NADH dehydrogenase I subunit K 2</fullName>
    </alternativeName>
    <alternativeName>
        <fullName evidence="1">NDH-1 subunit K 2</fullName>
    </alternativeName>
</protein>
<dbReference type="EC" id="7.1.1.-" evidence="1"/>
<dbReference type="EMBL" id="CP000473">
    <property type="protein sequence ID" value="ABJ86634.1"/>
    <property type="molecule type" value="Genomic_DNA"/>
</dbReference>
<dbReference type="SMR" id="Q01UN6"/>
<dbReference type="FunCoup" id="Q01UN6">
    <property type="interactions" value="284"/>
</dbReference>
<dbReference type="STRING" id="234267.Acid_5687"/>
<dbReference type="KEGG" id="sus:Acid_5687"/>
<dbReference type="eggNOG" id="COG0713">
    <property type="taxonomic scope" value="Bacteria"/>
</dbReference>
<dbReference type="HOGENOM" id="CLU_144724_0_0_0"/>
<dbReference type="InParanoid" id="Q01UN6"/>
<dbReference type="OrthoDB" id="9810120at2"/>
<dbReference type="GO" id="GO:0030964">
    <property type="term" value="C:NADH dehydrogenase complex"/>
    <property type="evidence" value="ECO:0007669"/>
    <property type="project" value="TreeGrafter"/>
</dbReference>
<dbReference type="GO" id="GO:0005886">
    <property type="term" value="C:plasma membrane"/>
    <property type="evidence" value="ECO:0007669"/>
    <property type="project" value="UniProtKB-SubCell"/>
</dbReference>
<dbReference type="GO" id="GO:0050136">
    <property type="term" value="F:NADH:ubiquinone reductase (non-electrogenic) activity"/>
    <property type="evidence" value="ECO:0007669"/>
    <property type="project" value="UniProtKB-UniRule"/>
</dbReference>
<dbReference type="GO" id="GO:0048038">
    <property type="term" value="F:quinone binding"/>
    <property type="evidence" value="ECO:0007669"/>
    <property type="project" value="UniProtKB-KW"/>
</dbReference>
<dbReference type="GO" id="GO:0042773">
    <property type="term" value="P:ATP synthesis coupled electron transport"/>
    <property type="evidence" value="ECO:0007669"/>
    <property type="project" value="InterPro"/>
</dbReference>
<dbReference type="FunFam" id="1.10.287.3510:FF:000001">
    <property type="entry name" value="NADH-quinone oxidoreductase subunit K"/>
    <property type="match status" value="1"/>
</dbReference>
<dbReference type="Gene3D" id="1.10.287.3510">
    <property type="match status" value="1"/>
</dbReference>
<dbReference type="HAMAP" id="MF_01456">
    <property type="entry name" value="NDH1_NuoK"/>
    <property type="match status" value="1"/>
</dbReference>
<dbReference type="InterPro" id="IPR001133">
    <property type="entry name" value="NADH_UbQ_OxRdtase_chain4L/K"/>
</dbReference>
<dbReference type="InterPro" id="IPR039428">
    <property type="entry name" value="NUOK/Mnh_C1-like"/>
</dbReference>
<dbReference type="NCBIfam" id="NF004320">
    <property type="entry name" value="PRK05715.1-2"/>
    <property type="match status" value="1"/>
</dbReference>
<dbReference type="NCBIfam" id="NF004321">
    <property type="entry name" value="PRK05715.1-3"/>
    <property type="match status" value="1"/>
</dbReference>
<dbReference type="NCBIfam" id="NF004323">
    <property type="entry name" value="PRK05715.1-5"/>
    <property type="match status" value="1"/>
</dbReference>
<dbReference type="PANTHER" id="PTHR11434:SF16">
    <property type="entry name" value="NADH-UBIQUINONE OXIDOREDUCTASE CHAIN 4L"/>
    <property type="match status" value="1"/>
</dbReference>
<dbReference type="PANTHER" id="PTHR11434">
    <property type="entry name" value="NADH-UBIQUINONE OXIDOREDUCTASE SUBUNIT ND4L"/>
    <property type="match status" value="1"/>
</dbReference>
<dbReference type="Pfam" id="PF00420">
    <property type="entry name" value="Oxidored_q2"/>
    <property type="match status" value="1"/>
</dbReference>
<evidence type="ECO:0000255" key="1">
    <source>
        <dbReference type="HAMAP-Rule" id="MF_01456"/>
    </source>
</evidence>